<evidence type="ECO:0000255" key="1">
    <source>
        <dbReference type="HAMAP-Rule" id="MF_00446"/>
    </source>
</evidence>
<comment type="function">
    <text evidence="1">Catalyzes the pyruvoyl-dependent decarboxylation of aspartate to produce beta-alanine.</text>
</comment>
<comment type="catalytic activity">
    <reaction evidence="1">
        <text>L-aspartate + H(+) = beta-alanine + CO2</text>
        <dbReference type="Rhea" id="RHEA:19497"/>
        <dbReference type="ChEBI" id="CHEBI:15378"/>
        <dbReference type="ChEBI" id="CHEBI:16526"/>
        <dbReference type="ChEBI" id="CHEBI:29991"/>
        <dbReference type="ChEBI" id="CHEBI:57966"/>
        <dbReference type="EC" id="4.1.1.11"/>
    </reaction>
</comment>
<comment type="cofactor">
    <cofactor evidence="1">
        <name>pyruvate</name>
        <dbReference type="ChEBI" id="CHEBI:15361"/>
    </cofactor>
    <text evidence="1">Binds 1 pyruvoyl group covalently per subunit.</text>
</comment>
<comment type="pathway">
    <text evidence="1">Cofactor biosynthesis; (R)-pantothenate biosynthesis; beta-alanine from L-aspartate: step 1/1.</text>
</comment>
<comment type="subunit">
    <text evidence="1">Heterooctamer of four alpha and four beta subunits.</text>
</comment>
<comment type="subcellular location">
    <subcellularLocation>
        <location evidence="1">Cytoplasm</location>
    </subcellularLocation>
</comment>
<comment type="PTM">
    <text evidence="1">Is synthesized initially as an inactive proenzyme, which is activated by self-cleavage at a specific serine bond to produce a beta-subunit with a hydroxyl group at its C-terminus and an alpha-subunit with a pyruvoyl group at its N-terminus.</text>
</comment>
<comment type="similarity">
    <text evidence="1">Belongs to the PanD family.</text>
</comment>
<proteinExistence type="inferred from homology"/>
<reference key="1">
    <citation type="journal article" date="2007" name="PLoS Genet.">
        <title>A tale of two oxidation states: bacterial colonization of arsenic-rich environments.</title>
        <authorList>
            <person name="Muller D."/>
            <person name="Medigue C."/>
            <person name="Koechler S."/>
            <person name="Barbe V."/>
            <person name="Barakat M."/>
            <person name="Talla E."/>
            <person name="Bonnefoy V."/>
            <person name="Krin E."/>
            <person name="Arsene-Ploetze F."/>
            <person name="Carapito C."/>
            <person name="Chandler M."/>
            <person name="Cournoyer B."/>
            <person name="Cruveiller S."/>
            <person name="Dossat C."/>
            <person name="Duval S."/>
            <person name="Heymann M."/>
            <person name="Leize E."/>
            <person name="Lieutaud A."/>
            <person name="Lievremont D."/>
            <person name="Makita Y."/>
            <person name="Mangenot S."/>
            <person name="Nitschke W."/>
            <person name="Ortet P."/>
            <person name="Perdrial N."/>
            <person name="Schoepp B."/>
            <person name="Siguier P."/>
            <person name="Simeonova D.D."/>
            <person name="Rouy Z."/>
            <person name="Segurens B."/>
            <person name="Turlin E."/>
            <person name="Vallenet D."/>
            <person name="van Dorsselaer A."/>
            <person name="Weiss S."/>
            <person name="Weissenbach J."/>
            <person name="Lett M.-C."/>
            <person name="Danchin A."/>
            <person name="Bertin P.N."/>
        </authorList>
    </citation>
    <scope>NUCLEOTIDE SEQUENCE [LARGE SCALE GENOMIC DNA]</scope>
    <source>
        <strain>ULPAs1</strain>
    </source>
</reference>
<sequence>MQRIMLRAKIHRAKVTQADLHYEGSCGIDADLLEAADIKVGEKIELYNINNGERFSTYAIQGARGSGEISLNGAAARCAHLGDLMIICTYGPMTDEEIATYTPKIVFVDEDNHFAGMKK</sequence>
<keyword id="KW-0068">Autocatalytic cleavage</keyword>
<keyword id="KW-0963">Cytoplasm</keyword>
<keyword id="KW-0210">Decarboxylase</keyword>
<keyword id="KW-0456">Lyase</keyword>
<keyword id="KW-0566">Pantothenate biosynthesis</keyword>
<keyword id="KW-0670">Pyruvate</keyword>
<keyword id="KW-1185">Reference proteome</keyword>
<keyword id="KW-0704">Schiff base</keyword>
<keyword id="KW-0865">Zymogen</keyword>
<feature type="chain" id="PRO_0000306999" description="Aspartate 1-decarboxylase beta chain" evidence="1">
    <location>
        <begin position="1"/>
        <end position="24"/>
    </location>
</feature>
<feature type="chain" id="PRO_0000307000" description="Aspartate 1-decarboxylase alpha chain" evidence="1">
    <location>
        <begin position="25"/>
        <end position="119"/>
    </location>
</feature>
<feature type="active site" description="Schiff-base intermediate with substrate; via pyruvic acid" evidence="1">
    <location>
        <position position="25"/>
    </location>
</feature>
<feature type="active site" description="Proton donor" evidence="1">
    <location>
        <position position="58"/>
    </location>
</feature>
<feature type="binding site" evidence="1">
    <location>
        <position position="57"/>
    </location>
    <ligand>
        <name>substrate</name>
    </ligand>
</feature>
<feature type="binding site" evidence="1">
    <location>
        <begin position="73"/>
        <end position="75"/>
    </location>
    <ligand>
        <name>substrate</name>
    </ligand>
</feature>
<feature type="modified residue" description="Pyruvic acid (Ser)" evidence="1">
    <location>
        <position position="25"/>
    </location>
</feature>
<gene>
    <name evidence="1" type="primary">panD</name>
    <name type="ordered locus">HEAR0328</name>
</gene>
<accession>A4G215</accession>
<dbReference type="EC" id="4.1.1.11" evidence="1"/>
<dbReference type="EMBL" id="CU207211">
    <property type="protein sequence ID" value="CAL60552.1"/>
    <property type="molecule type" value="Genomic_DNA"/>
</dbReference>
<dbReference type="SMR" id="A4G215"/>
<dbReference type="STRING" id="204773.HEAR0328"/>
<dbReference type="KEGG" id="har:HEAR0328"/>
<dbReference type="eggNOG" id="COG0853">
    <property type="taxonomic scope" value="Bacteria"/>
</dbReference>
<dbReference type="HOGENOM" id="CLU_115305_2_1_4"/>
<dbReference type="OrthoDB" id="9803983at2"/>
<dbReference type="UniPathway" id="UPA00028">
    <property type="reaction ID" value="UER00002"/>
</dbReference>
<dbReference type="Proteomes" id="UP000006697">
    <property type="component" value="Chromosome"/>
</dbReference>
<dbReference type="GO" id="GO:0005829">
    <property type="term" value="C:cytosol"/>
    <property type="evidence" value="ECO:0007669"/>
    <property type="project" value="TreeGrafter"/>
</dbReference>
<dbReference type="GO" id="GO:0004068">
    <property type="term" value="F:aspartate 1-decarboxylase activity"/>
    <property type="evidence" value="ECO:0007669"/>
    <property type="project" value="UniProtKB-UniRule"/>
</dbReference>
<dbReference type="GO" id="GO:0006523">
    <property type="term" value="P:alanine biosynthetic process"/>
    <property type="evidence" value="ECO:0007669"/>
    <property type="project" value="InterPro"/>
</dbReference>
<dbReference type="GO" id="GO:0015940">
    <property type="term" value="P:pantothenate biosynthetic process"/>
    <property type="evidence" value="ECO:0007669"/>
    <property type="project" value="UniProtKB-UniRule"/>
</dbReference>
<dbReference type="CDD" id="cd06919">
    <property type="entry name" value="Asp_decarbox"/>
    <property type="match status" value="1"/>
</dbReference>
<dbReference type="Gene3D" id="2.40.40.20">
    <property type="match status" value="1"/>
</dbReference>
<dbReference type="HAMAP" id="MF_00446">
    <property type="entry name" value="PanD"/>
    <property type="match status" value="1"/>
</dbReference>
<dbReference type="InterPro" id="IPR009010">
    <property type="entry name" value="Asp_de-COase-like_dom_sf"/>
</dbReference>
<dbReference type="InterPro" id="IPR003190">
    <property type="entry name" value="Asp_decarbox"/>
</dbReference>
<dbReference type="NCBIfam" id="TIGR00223">
    <property type="entry name" value="panD"/>
    <property type="match status" value="1"/>
</dbReference>
<dbReference type="PANTHER" id="PTHR21012">
    <property type="entry name" value="ASPARTATE 1-DECARBOXYLASE"/>
    <property type="match status" value="1"/>
</dbReference>
<dbReference type="PANTHER" id="PTHR21012:SF0">
    <property type="entry name" value="ASPARTATE 1-DECARBOXYLASE"/>
    <property type="match status" value="1"/>
</dbReference>
<dbReference type="Pfam" id="PF02261">
    <property type="entry name" value="Asp_decarbox"/>
    <property type="match status" value="1"/>
</dbReference>
<dbReference type="PIRSF" id="PIRSF006246">
    <property type="entry name" value="Asp_decarbox"/>
    <property type="match status" value="1"/>
</dbReference>
<dbReference type="SUPFAM" id="SSF50692">
    <property type="entry name" value="ADC-like"/>
    <property type="match status" value="1"/>
</dbReference>
<protein>
    <recommendedName>
        <fullName evidence="1">Aspartate 1-decarboxylase</fullName>
        <ecNumber evidence="1">4.1.1.11</ecNumber>
    </recommendedName>
    <alternativeName>
        <fullName evidence="1">Aspartate alpha-decarboxylase</fullName>
    </alternativeName>
    <component>
        <recommendedName>
            <fullName evidence="1">Aspartate 1-decarboxylase beta chain</fullName>
        </recommendedName>
    </component>
    <component>
        <recommendedName>
            <fullName evidence="1">Aspartate 1-decarboxylase alpha chain</fullName>
        </recommendedName>
    </component>
</protein>
<organism>
    <name type="scientific">Herminiimonas arsenicoxydans</name>
    <dbReference type="NCBI Taxonomy" id="204773"/>
    <lineage>
        <taxon>Bacteria</taxon>
        <taxon>Pseudomonadati</taxon>
        <taxon>Pseudomonadota</taxon>
        <taxon>Betaproteobacteria</taxon>
        <taxon>Burkholderiales</taxon>
        <taxon>Oxalobacteraceae</taxon>
        <taxon>Herminiimonas</taxon>
    </lineage>
</organism>
<name>PAND_HERAR</name>